<organism>
    <name type="scientific">Xenopus laevis</name>
    <name type="common">African clawed frog</name>
    <dbReference type="NCBI Taxonomy" id="8355"/>
    <lineage>
        <taxon>Eukaryota</taxon>
        <taxon>Metazoa</taxon>
        <taxon>Chordata</taxon>
        <taxon>Craniata</taxon>
        <taxon>Vertebrata</taxon>
        <taxon>Euteleostomi</taxon>
        <taxon>Amphibia</taxon>
        <taxon>Batrachia</taxon>
        <taxon>Anura</taxon>
        <taxon>Pipoidea</taxon>
        <taxon>Pipidae</taxon>
        <taxon>Xenopodinae</taxon>
        <taxon>Xenopus</taxon>
        <taxon>Xenopus</taxon>
    </lineage>
</organism>
<dbReference type="EMBL" id="BC078122">
    <property type="protein sequence ID" value="AAH78122.1"/>
    <property type="molecule type" value="mRNA"/>
</dbReference>
<dbReference type="RefSeq" id="NP_001087175.1">
    <property type="nucleotide sequence ID" value="NM_001093706.1"/>
</dbReference>
<dbReference type="SMR" id="Q6DCC6"/>
<dbReference type="BioGRID" id="103924">
    <property type="interactions" value="1"/>
</dbReference>
<dbReference type="IntAct" id="Q6DCC6">
    <property type="interactions" value="1"/>
</dbReference>
<dbReference type="DNASU" id="447064"/>
<dbReference type="GeneID" id="447064"/>
<dbReference type="KEGG" id="xla:447064"/>
<dbReference type="AGR" id="Xenbase:XB-GENE-967570"/>
<dbReference type="CTD" id="447064"/>
<dbReference type="Xenbase" id="XB-GENE-967570">
    <property type="gene designation" value="gtpbp6.S"/>
</dbReference>
<dbReference type="OrthoDB" id="10268034at2759"/>
<dbReference type="Proteomes" id="UP000186698">
    <property type="component" value="Chromosome 2S"/>
</dbReference>
<dbReference type="Bgee" id="447064">
    <property type="expression patterns" value="Expressed in egg cell and 18 other cell types or tissues"/>
</dbReference>
<dbReference type="GO" id="GO:0005737">
    <property type="term" value="C:cytoplasm"/>
    <property type="evidence" value="ECO:0000318"/>
    <property type="project" value="GO_Central"/>
</dbReference>
<dbReference type="GO" id="GO:0005525">
    <property type="term" value="F:GTP binding"/>
    <property type="evidence" value="ECO:0007669"/>
    <property type="project" value="UniProtKB-KW"/>
</dbReference>
<dbReference type="GO" id="GO:0046872">
    <property type="term" value="F:metal ion binding"/>
    <property type="evidence" value="ECO:0007669"/>
    <property type="project" value="UniProtKB-KW"/>
</dbReference>
<dbReference type="GO" id="GO:0043022">
    <property type="term" value="F:ribosome binding"/>
    <property type="evidence" value="ECO:0000318"/>
    <property type="project" value="GO_Central"/>
</dbReference>
<dbReference type="CDD" id="cd01878">
    <property type="entry name" value="HflX"/>
    <property type="match status" value="1"/>
</dbReference>
<dbReference type="FunFam" id="3.40.50.11060:FF:000002">
    <property type="entry name" value="GTP binding protein 6 (putative)"/>
    <property type="match status" value="1"/>
</dbReference>
<dbReference type="FunFam" id="3.40.50.300:FF:000886">
    <property type="entry name" value="Putative GTP-binding protein 6"/>
    <property type="match status" value="1"/>
</dbReference>
<dbReference type="Gene3D" id="3.40.50.11060">
    <property type="entry name" value="GTPase HflX, N-terminal domain"/>
    <property type="match status" value="1"/>
</dbReference>
<dbReference type="Gene3D" id="3.40.50.300">
    <property type="entry name" value="P-loop containing nucleotide triphosphate hydrolases"/>
    <property type="match status" value="1"/>
</dbReference>
<dbReference type="InterPro" id="IPR030394">
    <property type="entry name" value="G_HFLX_dom"/>
</dbReference>
<dbReference type="InterPro" id="IPR006073">
    <property type="entry name" value="GTP-bd"/>
</dbReference>
<dbReference type="InterPro" id="IPR032305">
    <property type="entry name" value="GTP-bd_M"/>
</dbReference>
<dbReference type="InterPro" id="IPR016496">
    <property type="entry name" value="GTPase_HflX"/>
</dbReference>
<dbReference type="InterPro" id="IPR025121">
    <property type="entry name" value="GTPase_HflX_N"/>
</dbReference>
<dbReference type="InterPro" id="IPR042108">
    <property type="entry name" value="GTPase_HflX_N_sf"/>
</dbReference>
<dbReference type="InterPro" id="IPR027417">
    <property type="entry name" value="P-loop_NTPase"/>
</dbReference>
<dbReference type="NCBIfam" id="TIGR03156">
    <property type="entry name" value="GTP_HflX"/>
    <property type="match status" value="1"/>
</dbReference>
<dbReference type="PANTHER" id="PTHR10229:SF0">
    <property type="entry name" value="GTP-BINDING PROTEIN 6-RELATED"/>
    <property type="match status" value="1"/>
</dbReference>
<dbReference type="PANTHER" id="PTHR10229">
    <property type="entry name" value="GTP-BINDING PROTEIN HFLX"/>
    <property type="match status" value="1"/>
</dbReference>
<dbReference type="Pfam" id="PF16360">
    <property type="entry name" value="GTP-bdg_M"/>
    <property type="match status" value="1"/>
</dbReference>
<dbReference type="Pfam" id="PF13167">
    <property type="entry name" value="GTP-bdg_N"/>
    <property type="match status" value="1"/>
</dbReference>
<dbReference type="Pfam" id="PF01926">
    <property type="entry name" value="MMR_HSR1"/>
    <property type="match status" value="1"/>
</dbReference>
<dbReference type="SUPFAM" id="SSF52540">
    <property type="entry name" value="P-loop containing nucleoside triphosphate hydrolases"/>
    <property type="match status" value="1"/>
</dbReference>
<dbReference type="PROSITE" id="PS51705">
    <property type="entry name" value="G_HFLX"/>
    <property type="match status" value="1"/>
</dbReference>
<accession>Q6DCC6</accession>
<reference key="1">
    <citation type="submission" date="2004-07" db="EMBL/GenBank/DDBJ databases">
        <authorList>
            <consortium name="NIH - Xenopus Gene Collection (XGC) project"/>
        </authorList>
    </citation>
    <scope>NUCLEOTIDE SEQUENCE [LARGE SCALE MRNA]</scope>
    <source>
        <tissue>Oocyte</tissue>
    </source>
</reference>
<keyword id="KW-0342">GTP-binding</keyword>
<keyword id="KW-0460">Magnesium</keyword>
<keyword id="KW-0479">Metal-binding</keyword>
<keyword id="KW-0547">Nucleotide-binding</keyword>
<keyword id="KW-1185">Reference proteome</keyword>
<sequence>MLLVRASRAVRCCCSYSLHKTVTFQARHSLYSAHKVHSNGHFHLPLSGIRCFFSGSPYWKAKKHGGEHSKAGNLTAIDDYWLEEVEEELEDLDLSPHTASLLQGAHRVFIVHPDVKWGAKKDQLSTADLQVAEAAALVHSLPNWSVVNTLIMSTKSPDSKLIFGKGNFQTLTDVIKGHPQITAVFLNVERLSSLTEKEMEEAWGVKVFDRYTVVLNIFRFNAHTKEAKLQIALAELPLLRSSLKNETAHMDQQGGGSRYIMGSGETFLEVQQRLLKEREIKIKYALEKVKKKRNLLRTQRRRREFPIISILGYTNSGKTTLIKALTGDEGLQPRDQLFATLDVTSHAGLLPCHMPVIYVDTIGFLSQLPHNLIESFSATLEDVVHSDLLIHVRDISHPETTKQKASVLSVLKNLGLPQQLLDTMIEVQNKIDLIDMPENTEDSVLSVSALHGHGLEDLKQQVETAVMKSTGRNVVTIKVNLESPQLSWLYKEASVQEVKVLPEDGTARVRVIITNSAYGKYRKLFCK</sequence>
<name>GTPB6_XENLA</name>
<protein>
    <recommendedName>
        <fullName>Putative GTP-binding protein 6</fullName>
    </recommendedName>
</protein>
<evidence type="ECO:0000255" key="1">
    <source>
        <dbReference type="PROSITE-ProRule" id="PRU01042"/>
    </source>
</evidence>
<feature type="chain" id="PRO_0000304800" description="Putative GTP-binding protein 6">
    <location>
        <begin position="1"/>
        <end position="527"/>
    </location>
</feature>
<feature type="domain" description="Hflx-type G" evidence="1">
    <location>
        <begin position="306"/>
        <end position="470"/>
    </location>
</feature>
<feature type="binding site" evidence="1">
    <location>
        <begin position="312"/>
        <end position="319"/>
    </location>
    <ligand>
        <name>GTP</name>
        <dbReference type="ChEBI" id="CHEBI:37565"/>
    </ligand>
</feature>
<feature type="binding site" evidence="1">
    <location>
        <position position="319"/>
    </location>
    <ligand>
        <name>Mg(2+)</name>
        <dbReference type="ChEBI" id="CHEBI:18420"/>
    </ligand>
</feature>
<feature type="binding site" evidence="1">
    <location>
        <begin position="338"/>
        <end position="342"/>
    </location>
    <ligand>
        <name>GTP</name>
        <dbReference type="ChEBI" id="CHEBI:37565"/>
    </ligand>
</feature>
<feature type="binding site" evidence="1">
    <location>
        <position position="340"/>
    </location>
    <ligand>
        <name>Mg(2+)</name>
        <dbReference type="ChEBI" id="CHEBI:18420"/>
    </ligand>
</feature>
<feature type="binding site" evidence="1">
    <location>
        <begin position="360"/>
        <end position="363"/>
    </location>
    <ligand>
        <name>GTP</name>
        <dbReference type="ChEBI" id="CHEBI:37565"/>
    </ligand>
</feature>
<feature type="binding site" evidence="1">
    <location>
        <begin position="429"/>
        <end position="432"/>
    </location>
    <ligand>
        <name>GTP</name>
        <dbReference type="ChEBI" id="CHEBI:37565"/>
    </ligand>
</feature>
<feature type="binding site" evidence="1">
    <location>
        <begin position="448"/>
        <end position="450"/>
    </location>
    <ligand>
        <name>GTP</name>
        <dbReference type="ChEBI" id="CHEBI:37565"/>
    </ligand>
</feature>
<proteinExistence type="evidence at transcript level"/>
<comment type="cofactor">
    <cofactor evidence="1">
        <name>Mg(2+)</name>
        <dbReference type="ChEBI" id="CHEBI:18420"/>
    </cofactor>
</comment>
<comment type="similarity">
    <text evidence="1">Belongs to the TRAFAC class OBG-HflX-like GTPase superfamily. HflX GTPase family.</text>
</comment>
<gene>
    <name type="primary">gtpbp6</name>
</gene>